<organism>
    <name type="scientific">Frankia casuarinae (strain DSM 45818 / CECT 9043 / HFP020203 / CcI3)</name>
    <dbReference type="NCBI Taxonomy" id="106370"/>
    <lineage>
        <taxon>Bacteria</taxon>
        <taxon>Bacillati</taxon>
        <taxon>Actinomycetota</taxon>
        <taxon>Actinomycetes</taxon>
        <taxon>Frankiales</taxon>
        <taxon>Frankiaceae</taxon>
        <taxon>Frankia</taxon>
    </lineage>
</organism>
<keyword id="KW-1185">Reference proteome</keyword>
<keyword id="KW-0687">Ribonucleoprotein</keyword>
<keyword id="KW-0689">Ribosomal protein</keyword>
<keyword id="KW-0694">RNA-binding</keyword>
<keyword id="KW-0699">rRNA-binding</keyword>
<keyword id="KW-0820">tRNA-binding</keyword>
<feature type="chain" id="PRO_0000306610" description="Small ribosomal subunit protein uS13">
    <location>
        <begin position="1"/>
        <end position="126"/>
    </location>
</feature>
<feature type="region of interest" description="Disordered" evidence="2">
    <location>
        <begin position="95"/>
        <end position="126"/>
    </location>
</feature>
<gene>
    <name evidence="1" type="primary">rpsM</name>
    <name type="ordered locus">Francci3_0607</name>
</gene>
<reference key="1">
    <citation type="journal article" date="2007" name="Genome Res.">
        <title>Genome characteristics of facultatively symbiotic Frankia sp. strains reflect host range and host plant biogeography.</title>
        <authorList>
            <person name="Normand P."/>
            <person name="Lapierre P."/>
            <person name="Tisa L.S."/>
            <person name="Gogarten J.P."/>
            <person name="Alloisio N."/>
            <person name="Bagnarol E."/>
            <person name="Bassi C.A."/>
            <person name="Berry A.M."/>
            <person name="Bickhart D.M."/>
            <person name="Choisne N."/>
            <person name="Couloux A."/>
            <person name="Cournoyer B."/>
            <person name="Cruveiller S."/>
            <person name="Daubin V."/>
            <person name="Demange N."/>
            <person name="Francino M.P."/>
            <person name="Goltsman E."/>
            <person name="Huang Y."/>
            <person name="Kopp O.R."/>
            <person name="Labarre L."/>
            <person name="Lapidus A."/>
            <person name="Lavire C."/>
            <person name="Marechal J."/>
            <person name="Martinez M."/>
            <person name="Mastronunzio J.E."/>
            <person name="Mullin B.C."/>
            <person name="Niemann J."/>
            <person name="Pujic P."/>
            <person name="Rawnsley T."/>
            <person name="Rouy Z."/>
            <person name="Schenowitz C."/>
            <person name="Sellstedt A."/>
            <person name="Tavares F."/>
            <person name="Tomkins J.P."/>
            <person name="Vallenet D."/>
            <person name="Valverde C."/>
            <person name="Wall L.G."/>
            <person name="Wang Y."/>
            <person name="Medigue C."/>
            <person name="Benson D.R."/>
        </authorList>
    </citation>
    <scope>NUCLEOTIDE SEQUENCE [LARGE SCALE GENOMIC DNA]</scope>
    <source>
        <strain>DSM 45818 / CECT 9043 / HFP020203 / CcI3</strain>
    </source>
</reference>
<dbReference type="EMBL" id="CP000249">
    <property type="protein sequence ID" value="ABD09991.1"/>
    <property type="molecule type" value="Genomic_DNA"/>
</dbReference>
<dbReference type="RefSeq" id="WP_011435060.1">
    <property type="nucleotide sequence ID" value="NZ_LRTJ01000013.1"/>
</dbReference>
<dbReference type="SMR" id="Q2JFF1"/>
<dbReference type="STRING" id="106370.Francci3_0607"/>
<dbReference type="KEGG" id="fra:Francci3_0607"/>
<dbReference type="eggNOG" id="COG0099">
    <property type="taxonomic scope" value="Bacteria"/>
</dbReference>
<dbReference type="HOGENOM" id="CLU_103849_1_2_11"/>
<dbReference type="OrthoDB" id="9803610at2"/>
<dbReference type="PhylomeDB" id="Q2JFF1"/>
<dbReference type="Proteomes" id="UP000001937">
    <property type="component" value="Chromosome"/>
</dbReference>
<dbReference type="GO" id="GO:0005829">
    <property type="term" value="C:cytosol"/>
    <property type="evidence" value="ECO:0007669"/>
    <property type="project" value="TreeGrafter"/>
</dbReference>
<dbReference type="GO" id="GO:0015935">
    <property type="term" value="C:small ribosomal subunit"/>
    <property type="evidence" value="ECO:0007669"/>
    <property type="project" value="TreeGrafter"/>
</dbReference>
<dbReference type="GO" id="GO:0019843">
    <property type="term" value="F:rRNA binding"/>
    <property type="evidence" value="ECO:0007669"/>
    <property type="project" value="UniProtKB-UniRule"/>
</dbReference>
<dbReference type="GO" id="GO:0003735">
    <property type="term" value="F:structural constituent of ribosome"/>
    <property type="evidence" value="ECO:0007669"/>
    <property type="project" value="InterPro"/>
</dbReference>
<dbReference type="GO" id="GO:0000049">
    <property type="term" value="F:tRNA binding"/>
    <property type="evidence" value="ECO:0007669"/>
    <property type="project" value="UniProtKB-UniRule"/>
</dbReference>
<dbReference type="GO" id="GO:0006412">
    <property type="term" value="P:translation"/>
    <property type="evidence" value="ECO:0007669"/>
    <property type="project" value="UniProtKB-UniRule"/>
</dbReference>
<dbReference type="FunFam" id="1.10.8.50:FF:000001">
    <property type="entry name" value="30S ribosomal protein S13"/>
    <property type="match status" value="1"/>
</dbReference>
<dbReference type="FunFam" id="4.10.910.10:FF:000001">
    <property type="entry name" value="30S ribosomal protein S13"/>
    <property type="match status" value="1"/>
</dbReference>
<dbReference type="Gene3D" id="1.10.8.50">
    <property type="match status" value="1"/>
</dbReference>
<dbReference type="Gene3D" id="4.10.910.10">
    <property type="entry name" value="30s ribosomal protein s13, domain 2"/>
    <property type="match status" value="1"/>
</dbReference>
<dbReference type="HAMAP" id="MF_01315">
    <property type="entry name" value="Ribosomal_uS13"/>
    <property type="match status" value="1"/>
</dbReference>
<dbReference type="InterPro" id="IPR027437">
    <property type="entry name" value="Rbsml_uS13_C"/>
</dbReference>
<dbReference type="InterPro" id="IPR001892">
    <property type="entry name" value="Ribosomal_uS13"/>
</dbReference>
<dbReference type="InterPro" id="IPR010979">
    <property type="entry name" value="Ribosomal_uS13-like_H2TH"/>
</dbReference>
<dbReference type="InterPro" id="IPR019980">
    <property type="entry name" value="Ribosomal_uS13_bac-type"/>
</dbReference>
<dbReference type="InterPro" id="IPR018269">
    <property type="entry name" value="Ribosomal_uS13_CS"/>
</dbReference>
<dbReference type="NCBIfam" id="TIGR03631">
    <property type="entry name" value="uS13_bact"/>
    <property type="match status" value="1"/>
</dbReference>
<dbReference type="PANTHER" id="PTHR10871">
    <property type="entry name" value="30S RIBOSOMAL PROTEIN S13/40S RIBOSOMAL PROTEIN S18"/>
    <property type="match status" value="1"/>
</dbReference>
<dbReference type="PANTHER" id="PTHR10871:SF1">
    <property type="entry name" value="SMALL RIBOSOMAL SUBUNIT PROTEIN US13M"/>
    <property type="match status" value="1"/>
</dbReference>
<dbReference type="Pfam" id="PF00416">
    <property type="entry name" value="Ribosomal_S13"/>
    <property type="match status" value="1"/>
</dbReference>
<dbReference type="PIRSF" id="PIRSF002134">
    <property type="entry name" value="Ribosomal_S13"/>
    <property type="match status" value="1"/>
</dbReference>
<dbReference type="SUPFAM" id="SSF46946">
    <property type="entry name" value="S13-like H2TH domain"/>
    <property type="match status" value="1"/>
</dbReference>
<dbReference type="PROSITE" id="PS00646">
    <property type="entry name" value="RIBOSOMAL_S13_1"/>
    <property type="match status" value="1"/>
</dbReference>
<dbReference type="PROSITE" id="PS50159">
    <property type="entry name" value="RIBOSOMAL_S13_2"/>
    <property type="match status" value="1"/>
</dbReference>
<sequence>MARLSGVDLPREKRVEIALTYIFGIGRSRSRDTLAATAVNPDTRVRDLSEEEIVRLRDWIDANYRVEGDLNREIKQDIRRKMEIGCYQGLRHRRNLPVHGQRTHTNARTRKGPRRAIAGKKKAGKK</sequence>
<evidence type="ECO:0000255" key="1">
    <source>
        <dbReference type="HAMAP-Rule" id="MF_01315"/>
    </source>
</evidence>
<evidence type="ECO:0000256" key="2">
    <source>
        <dbReference type="SAM" id="MobiDB-lite"/>
    </source>
</evidence>
<evidence type="ECO:0000305" key="3"/>
<comment type="function">
    <text evidence="1">Located at the top of the head of the 30S subunit, it contacts several helices of the 16S rRNA. In the 70S ribosome it contacts the 23S rRNA (bridge B1a) and protein L5 of the 50S subunit (bridge B1b), connecting the 2 subunits; these bridges are implicated in subunit movement. Contacts the tRNAs in the A and P-sites.</text>
</comment>
<comment type="subunit">
    <text evidence="1">Part of the 30S ribosomal subunit. Forms a loose heterodimer with protein S19. Forms two bridges to the 50S subunit in the 70S ribosome.</text>
</comment>
<comment type="similarity">
    <text evidence="1">Belongs to the universal ribosomal protein uS13 family.</text>
</comment>
<name>RS13_FRACC</name>
<protein>
    <recommendedName>
        <fullName evidence="1">Small ribosomal subunit protein uS13</fullName>
    </recommendedName>
    <alternativeName>
        <fullName evidence="3">30S ribosomal protein S13</fullName>
    </alternativeName>
</protein>
<proteinExistence type="inferred from homology"/>
<accession>Q2JFF1</accession>